<protein>
    <recommendedName>
        <fullName>Pleckstrin homology-like domain family B member 2</fullName>
    </recommendedName>
    <alternativeName>
        <fullName>Protein LL5-beta</fullName>
    </alternativeName>
</protein>
<accession>Q86SQ0</accession>
<accession>A5PKZ3</accession>
<accession>Q59EA8</accession>
<accession>Q68CY3</accession>
<accession>Q6NT98</accession>
<accession>Q8N8U8</accession>
<accession>Q8NAB1</accession>
<accession>Q8NCU5</accession>
<comment type="function">
    <text evidence="1 6">Seems to be involved in the assembly of the postsynaptic apparatus. May play a role in acetyl-choline receptor (AChR) aggregation in the postsynaptic membrane (By similarity).</text>
</comment>
<comment type="subunit">
    <text evidence="6 8 9 10">Interacts with FLNC (PubMed:12376540). Interacts with AMOTL2; interaction may facilitate PHLDB2 localization to the myotube podosome cortex that surrounds the core (PubMed:23525008). Part of a cortical microtubule stabilization complex (CMSC) composed of KANK1, PPFIA1, PPFIBP1, ERC1/ELKS, PHLDB2/LL5beta, CLASPs, KIF21A and possibly additional interactors; within CMSCs KANK1 and PHLDB2/LL5beta appear to be the core components for targeting of microtubule-binding proteins KIF21A and CLASPs, whereas PPFIA1, PPFIBP1 and ERC1/ELKS serve as scaffolds for protein clustering.</text>
</comment>
<comment type="interaction">
    <interactant intactId="EBI-2798483">
        <id>Q86SQ0</id>
    </interactant>
    <interactant intactId="EBI-350432">
        <id>P21333</id>
        <label>FLNA</label>
    </interactant>
    <organismsDiffer>false</organismsDiffer>
    <experiments>3</experiments>
</comment>
<comment type="subcellular location">
    <subcellularLocation>
        <location evidence="6">Cytoplasm</location>
    </subcellularLocation>
    <subcellularLocation>
        <location evidence="9">Cytoplasm</location>
        <location evidence="9">Cell cortex</location>
    </subcellularLocation>
    <subcellularLocation>
        <location evidence="6">Membrane</location>
        <topology evidence="6">Peripheral membrane protein</topology>
    </subcellularLocation>
    <subcellularLocation>
        <location evidence="2">Cell projection</location>
        <location evidence="2">Podosome</location>
    </subcellularLocation>
    <text evidence="2">Translocates to the plasma membrane at high levels of PtdIns(3,4,5)P3. At low levels of PtdIns(3,4,5)P3 is translocated to vesicular compartments. Localized to the myotube podosome cortex that surrounds the core (By similarity).</text>
</comment>
<comment type="alternative products">
    <event type="alternative splicing"/>
    <isoform>
        <id>Q86SQ0-1</id>
        <name>1</name>
        <sequence type="displayed"/>
    </isoform>
    <isoform>
        <id>Q86SQ0-2</id>
        <name>2</name>
        <sequence type="described" ref="VSP_016745"/>
    </isoform>
    <isoform>
        <id>Q86SQ0-3</id>
        <name>3</name>
        <sequence type="described" ref="VSP_016744 VSP_016745"/>
    </isoform>
</comment>
<comment type="domain">
    <text>The PH domain mediates the binding to phosphoinositides.</text>
</comment>
<comment type="sequence caution" evidence="15">
    <conflict type="miscellaneous discrepancy">
        <sequence resource="EMBL-CDS" id="AAH69194"/>
    </conflict>
    <text>Contaminating sequence. Potential poly-A sequence.</text>
</comment>
<comment type="sequence caution" evidence="15">
    <conflict type="erroneous initiation">
        <sequence resource="EMBL-CDS" id="BAD93140"/>
    </conflict>
</comment>
<sequence length="1253" mass="142158">MEEHSYIQKELDLQNGSLEEDSVVHSVENDSQNMMESLSPKKYSSSLRFKANGDYSGSYLTLSQPVPAKRSPSPLGTSVRSSPSLAKIQGSKQFSYDGTDKNIPMKPPTPLLNTTSSLSGYPLGRADFDHYTGRDSERALRLSEKPPYSKYSSRHKSHDNVYSLGGLEGRKASGSLLAMWNGSSLSDAGPPPISRSGAASMPSSPKQARKMSIQDSLALQPKLTRHKELASENINLRTRKYSSSSLSHMGAYSRSLPRLYRATENQLTPLSLPPRNSLGNSKRTKLGEKDLPHSVIDNDNYLNFSSLSSGALPYKTSASEGNPYVSSTLSVPASPRVARKMLLASTSSCASDDFDQASYVGTNPSHSLLAGESDRVFATRRNFSCGSVEFDEADLESLRQASGTPQPALRERKSSISSISGRDDLMDYHRRQREERLREQEMERLERQRLETILSLCAEYTKPDSRLSTGTTVEDVQKINKELEKLQLSDEESVFEEALMSPDTRYRCHRKDSLPDADLASCGSLSQSSASFFTPRSTRNDELLSDLTRTPPPPSSTFPKASSESSYLSILPKTPEGISEEQRSQELAAMEETRIVILNNLEELKQKIKDINDQMDESFRELDMECALLDGEQKSETTELMKEKEILDHLNRKIAELEKNIVGEKTKEKVKLDAEREKLERLQELYSEQKTQLDNCPESMREQLQQQLKRDADLLDVESKHFEDLEFQQLEHESRLDEEKENLTQQLLREVAEYQRNIVSRKEKISALKKQANHIVQQAQREQDHFVKEKNNLIMMLQREKENLCNLEKKYSSLSGGKGFPVNPNTLKEGYISVNEINEPCGNSTNLSPSTQFPADADAVATEPATAVLASQPQSKEHFRSLEERKKQHKEGLYLSDTLPRKKTTSSISPHFSSATMGRSITPKAHLPLGQSNSCGSVLPPSLAAMAKDSESRRMLRGYNHQQMSEGHRQKSEFYNRTASESNVYLNSFHYPDHSYKDQAFDTLSLDSSDSMETSISACSPDNISSASTSNIARIEEMERLLKQAHAEKTRLLESREREMEAKKRALEEEKRRREILEKRLQEETSQRQKLIEKEVKIRERQRAQARPLTRYLPVRKEDFDLRSHVETAGHNIDTCYHVSITEKTCRGFLIKMGGKIKTWKKRWFVFDRNKRTFSYYADKHETKLKGVIYFQAIEEVYYDHLKNANKSPNPLLTFSVKTHDRIYYMVAPSPEAMRIWMDVIVTGAEGYTHFLL</sequence>
<proteinExistence type="evidence at protein level"/>
<name>PHLB2_HUMAN</name>
<reference key="1">
    <citation type="journal article" date="2003" name="J. Biol. Chem.">
        <title>LL5beta is a phosphatidylinositol (3,4,5)-trisphosphate sensor that can bind the cytoskeletal adaptor, gamma-filamin.</title>
        <authorList>
            <person name="Paranavitane V."/>
            <person name="Coadwell W.J."/>
            <person name="Eguinoa A."/>
            <person name="Hawkins P.T."/>
            <person name="Stephens L."/>
        </authorList>
    </citation>
    <scope>NUCLEOTIDE SEQUENCE [MRNA] (ISOFORM 1)</scope>
    <scope>FUNCTION</scope>
    <scope>SUBCELLULAR LOCATION</scope>
    <scope>TISSUE SPECIFICITY</scope>
    <scope>INTERACTION WITH FLNC</scope>
    <scope>BINDING TO PTDINS(3,4,5)P3</scope>
    <scope>MUTAGENESIS OF 1162-LYS-ARG-1163</scope>
</reference>
<reference key="2">
    <citation type="submission" date="2002-04" db="EMBL/GenBank/DDBJ databases">
        <authorList>
            <person name="Guo J.H."/>
            <person name="Yu L."/>
        </authorList>
    </citation>
    <scope>NUCLEOTIDE SEQUENCE [LARGE SCALE MRNA] (ISOFORM 2)</scope>
    <source>
        <tissue>Testis</tissue>
    </source>
</reference>
<reference key="3">
    <citation type="submission" date="2005-03" db="EMBL/GenBank/DDBJ databases">
        <authorList>
            <person name="Totoki Y."/>
            <person name="Toyoda A."/>
            <person name="Takeda T."/>
            <person name="Sakaki Y."/>
            <person name="Tanaka A."/>
            <person name="Yokoyama S."/>
            <person name="Ohara O."/>
            <person name="Nagase T."/>
            <person name="Kikuno R.F."/>
        </authorList>
    </citation>
    <scope>NUCLEOTIDE SEQUENCE [LARGE SCALE MRNA] (ISOFORM 1)</scope>
    <source>
        <tissue>Aortic endothelium</tissue>
    </source>
</reference>
<reference key="4">
    <citation type="journal article" date="2007" name="BMC Genomics">
        <title>The full-ORF clone resource of the German cDNA consortium.</title>
        <authorList>
            <person name="Bechtel S."/>
            <person name="Rosenfelder H."/>
            <person name="Duda A."/>
            <person name="Schmidt C.P."/>
            <person name="Ernst U."/>
            <person name="Wellenreuther R."/>
            <person name="Mehrle A."/>
            <person name="Schuster C."/>
            <person name="Bahr A."/>
            <person name="Bloecker H."/>
            <person name="Heubner D."/>
            <person name="Hoerlein A."/>
            <person name="Michel G."/>
            <person name="Wedler H."/>
            <person name="Koehrer K."/>
            <person name="Ottenwaelder B."/>
            <person name="Poustka A."/>
            <person name="Wiemann S."/>
            <person name="Schupp I."/>
        </authorList>
    </citation>
    <scope>NUCLEOTIDE SEQUENCE [LARGE SCALE MRNA] (ISOFORM 3)</scope>
    <source>
        <tissue>Fetal kidney</tissue>
    </source>
</reference>
<reference key="5">
    <citation type="submission" date="2005-09" db="EMBL/GenBank/DDBJ databases">
        <authorList>
            <person name="Mural R.J."/>
            <person name="Istrail S."/>
            <person name="Sutton G.G."/>
            <person name="Florea L."/>
            <person name="Halpern A.L."/>
            <person name="Mobarry C.M."/>
            <person name="Lippert R."/>
            <person name="Walenz B."/>
            <person name="Shatkay H."/>
            <person name="Dew I."/>
            <person name="Miller J.R."/>
            <person name="Flanigan M.J."/>
            <person name="Edwards N.J."/>
            <person name="Bolanos R."/>
            <person name="Fasulo D."/>
            <person name="Halldorsson B.V."/>
            <person name="Hannenhalli S."/>
            <person name="Turner R."/>
            <person name="Yooseph S."/>
            <person name="Lu F."/>
            <person name="Nusskern D.R."/>
            <person name="Shue B.C."/>
            <person name="Zheng X.H."/>
            <person name="Zhong F."/>
            <person name="Delcher A.L."/>
            <person name="Huson D.H."/>
            <person name="Kravitz S.A."/>
            <person name="Mouchard L."/>
            <person name="Reinert K."/>
            <person name="Remington K.A."/>
            <person name="Clark A.G."/>
            <person name="Waterman M.S."/>
            <person name="Eichler E.E."/>
            <person name="Adams M.D."/>
            <person name="Hunkapiller M.W."/>
            <person name="Myers E.W."/>
            <person name="Venter J.C."/>
        </authorList>
    </citation>
    <scope>NUCLEOTIDE SEQUENCE [LARGE SCALE GENOMIC DNA]</scope>
</reference>
<reference key="6">
    <citation type="journal article" date="2004" name="Genome Res.">
        <title>The status, quality, and expansion of the NIH full-length cDNA project: the Mammalian Gene Collection (MGC).</title>
        <authorList>
            <consortium name="The MGC Project Team"/>
        </authorList>
    </citation>
    <scope>NUCLEOTIDE SEQUENCE [LARGE SCALE MRNA] (ISOFORM 1)</scope>
    <scope>NUCLEOTIDE SEQUENCE [LARGE SCALE MRNA] OF 1-1156 (ISOFORM 2)</scope>
    <scope>VARIANT SER-941</scope>
    <source>
        <tissue>Lung</tissue>
    </source>
</reference>
<reference key="7">
    <citation type="journal article" date="2004" name="Nat. Genet.">
        <title>Complete sequencing and characterization of 21,243 full-length human cDNAs.</title>
        <authorList>
            <person name="Ota T."/>
            <person name="Suzuki Y."/>
            <person name="Nishikawa T."/>
            <person name="Otsuki T."/>
            <person name="Sugiyama T."/>
            <person name="Irie R."/>
            <person name="Wakamatsu A."/>
            <person name="Hayashi K."/>
            <person name="Sato H."/>
            <person name="Nagai K."/>
            <person name="Kimura K."/>
            <person name="Makita H."/>
            <person name="Sekine M."/>
            <person name="Obayashi M."/>
            <person name="Nishi T."/>
            <person name="Shibahara T."/>
            <person name="Tanaka T."/>
            <person name="Ishii S."/>
            <person name="Yamamoto J."/>
            <person name="Saito K."/>
            <person name="Kawai Y."/>
            <person name="Isono Y."/>
            <person name="Nakamura Y."/>
            <person name="Nagahari K."/>
            <person name="Murakami K."/>
            <person name="Yasuda T."/>
            <person name="Iwayanagi T."/>
            <person name="Wagatsuma M."/>
            <person name="Shiratori A."/>
            <person name="Sudo H."/>
            <person name="Hosoiri T."/>
            <person name="Kaku Y."/>
            <person name="Kodaira H."/>
            <person name="Kondo H."/>
            <person name="Sugawara M."/>
            <person name="Takahashi M."/>
            <person name="Kanda K."/>
            <person name="Yokoi T."/>
            <person name="Furuya T."/>
            <person name="Kikkawa E."/>
            <person name="Omura Y."/>
            <person name="Abe K."/>
            <person name="Kamihara K."/>
            <person name="Katsuta N."/>
            <person name="Sato K."/>
            <person name="Tanikawa M."/>
            <person name="Yamazaki M."/>
            <person name="Ninomiya K."/>
            <person name="Ishibashi T."/>
            <person name="Yamashita H."/>
            <person name="Murakawa K."/>
            <person name="Fujimori K."/>
            <person name="Tanai H."/>
            <person name="Kimata M."/>
            <person name="Watanabe M."/>
            <person name="Hiraoka S."/>
            <person name="Chiba Y."/>
            <person name="Ishida S."/>
            <person name="Ono Y."/>
            <person name="Takiguchi S."/>
            <person name="Watanabe S."/>
            <person name="Yosida M."/>
            <person name="Hotuta T."/>
            <person name="Kusano J."/>
            <person name="Kanehori K."/>
            <person name="Takahashi-Fujii A."/>
            <person name="Hara H."/>
            <person name="Tanase T.-O."/>
            <person name="Nomura Y."/>
            <person name="Togiya S."/>
            <person name="Komai F."/>
            <person name="Hara R."/>
            <person name="Takeuchi K."/>
            <person name="Arita M."/>
            <person name="Imose N."/>
            <person name="Musashino K."/>
            <person name="Yuuki H."/>
            <person name="Oshima A."/>
            <person name="Sasaki N."/>
            <person name="Aotsuka S."/>
            <person name="Yoshikawa Y."/>
            <person name="Matsunawa H."/>
            <person name="Ichihara T."/>
            <person name="Shiohata N."/>
            <person name="Sano S."/>
            <person name="Moriya S."/>
            <person name="Momiyama H."/>
            <person name="Satoh N."/>
            <person name="Takami S."/>
            <person name="Terashima Y."/>
            <person name="Suzuki O."/>
            <person name="Nakagawa S."/>
            <person name="Senoh A."/>
            <person name="Mizoguchi H."/>
            <person name="Goto Y."/>
            <person name="Shimizu F."/>
            <person name="Wakebe H."/>
            <person name="Hishigaki H."/>
            <person name="Watanabe T."/>
            <person name="Sugiyama A."/>
            <person name="Takemoto M."/>
            <person name="Kawakami B."/>
            <person name="Yamazaki M."/>
            <person name="Watanabe K."/>
            <person name="Kumagai A."/>
            <person name="Itakura S."/>
            <person name="Fukuzumi Y."/>
            <person name="Fujimori Y."/>
            <person name="Komiyama M."/>
            <person name="Tashiro H."/>
            <person name="Tanigami A."/>
            <person name="Fujiwara T."/>
            <person name="Ono T."/>
            <person name="Yamada K."/>
            <person name="Fujii Y."/>
            <person name="Ozaki K."/>
            <person name="Hirao M."/>
            <person name="Ohmori Y."/>
            <person name="Kawabata A."/>
            <person name="Hikiji T."/>
            <person name="Kobatake N."/>
            <person name="Inagaki H."/>
            <person name="Ikema Y."/>
            <person name="Okamoto S."/>
            <person name="Okitani R."/>
            <person name="Kawakami T."/>
            <person name="Noguchi S."/>
            <person name="Itoh T."/>
            <person name="Shigeta K."/>
            <person name="Senba T."/>
            <person name="Matsumura K."/>
            <person name="Nakajima Y."/>
            <person name="Mizuno T."/>
            <person name="Morinaga M."/>
            <person name="Sasaki M."/>
            <person name="Togashi T."/>
            <person name="Oyama M."/>
            <person name="Hata H."/>
            <person name="Watanabe M."/>
            <person name="Komatsu T."/>
            <person name="Mizushima-Sugano J."/>
            <person name="Satoh T."/>
            <person name="Shirai Y."/>
            <person name="Takahashi Y."/>
            <person name="Nakagawa K."/>
            <person name="Okumura K."/>
            <person name="Nagase T."/>
            <person name="Nomura N."/>
            <person name="Kikuchi H."/>
            <person name="Masuho Y."/>
            <person name="Yamashita R."/>
            <person name="Nakai K."/>
            <person name="Yada T."/>
            <person name="Nakamura Y."/>
            <person name="Ohara O."/>
            <person name="Isogai T."/>
            <person name="Sugano S."/>
        </authorList>
    </citation>
    <scope>NUCLEOTIDE SEQUENCE [LARGE SCALE MRNA] OF 1-788 (ISOFORM 2)</scope>
    <scope>NUCLEOTIDE SEQUENCE [LARGE SCALE MRNA] OF 1-787 (ISOFORM 1)</scope>
    <source>
        <tissue>Spleen</tissue>
    </source>
</reference>
<reference key="8">
    <citation type="journal article" date="2000" name="Biochem. J.">
        <title>Identification of pleckstrin-homology-domain-containing proteins with novel phosphoinositide-binding specificities.</title>
        <authorList>
            <person name="Dowler S.J."/>
            <person name="Currie R.A."/>
            <person name="Campbell D.G."/>
            <person name="Deak M."/>
            <person name="Kular G."/>
            <person name="Downes C.P."/>
            <person name="Alessi D.R."/>
        </authorList>
    </citation>
    <scope>BINDING TO PHOSPHOINOSITIDES</scope>
</reference>
<reference key="9">
    <citation type="journal article" date="2008" name="J. Proteome Res.">
        <title>Combining protein-based IMAC, peptide-based IMAC, and MudPIT for efficient phosphoproteomic analysis.</title>
        <authorList>
            <person name="Cantin G.T."/>
            <person name="Yi W."/>
            <person name="Lu B."/>
            <person name="Park S.K."/>
            <person name="Xu T."/>
            <person name="Lee J.-D."/>
            <person name="Yates J.R. III"/>
        </authorList>
    </citation>
    <scope>IDENTIFICATION BY MASS SPECTROMETRY [LARGE SCALE ANALYSIS]</scope>
    <source>
        <tissue>Cervix carcinoma</tissue>
    </source>
</reference>
<reference key="10">
    <citation type="journal article" date="2008" name="Proc. Natl. Acad. Sci. U.S.A.">
        <title>A quantitative atlas of mitotic phosphorylation.</title>
        <authorList>
            <person name="Dephoure N."/>
            <person name="Zhou C."/>
            <person name="Villen J."/>
            <person name="Beausoleil S.A."/>
            <person name="Bakalarski C.E."/>
            <person name="Elledge S.J."/>
            <person name="Gygi S.P."/>
        </authorList>
    </citation>
    <scope>PHOSPHORYLATION [LARGE SCALE ANALYSIS] AT SER-71; SER-73; SER-157; SER-212; SER-334; SER-351; SER-384; SER-387; SER-415; SER-468; SER-489; SER-501; SER-513; THR-550; THR-574 AND THR-898</scope>
    <scope>IDENTIFICATION BY MASS SPECTROMETRY [LARGE SCALE ANALYSIS]</scope>
    <source>
        <tissue>Cervix carcinoma</tissue>
    </source>
</reference>
<reference key="11">
    <citation type="journal article" date="2009" name="Sci. Signal.">
        <title>Quantitative phosphoproteomic analysis of T cell receptor signaling reveals system-wide modulation of protein-protein interactions.</title>
        <authorList>
            <person name="Mayya V."/>
            <person name="Lundgren D.H."/>
            <person name="Hwang S.-I."/>
            <person name="Rezaul K."/>
            <person name="Wu L."/>
            <person name="Eng J.K."/>
            <person name="Rodionov V."/>
            <person name="Han D.K."/>
        </authorList>
    </citation>
    <scope>PHOSPHORYLATION [LARGE SCALE ANALYSIS] AT SER-157</scope>
    <scope>IDENTIFICATION BY MASS SPECTROMETRY [LARGE SCALE ANALYSIS]</scope>
    <source>
        <tissue>Leukemic T-cell</tissue>
    </source>
</reference>
<reference key="12">
    <citation type="journal article" date="2010" name="Sci. Signal.">
        <title>Quantitative phosphoproteomics reveals widespread full phosphorylation site occupancy during mitosis.</title>
        <authorList>
            <person name="Olsen J.V."/>
            <person name="Vermeulen M."/>
            <person name="Santamaria A."/>
            <person name="Kumar C."/>
            <person name="Miller M.L."/>
            <person name="Jensen L.J."/>
            <person name="Gnad F."/>
            <person name="Cox J."/>
            <person name="Jensen T.S."/>
            <person name="Nigg E.A."/>
            <person name="Brunak S."/>
            <person name="Mann M."/>
        </authorList>
    </citation>
    <scope>PHOSPHORYLATION [LARGE SCALE ANALYSIS] AT SER-489; SER-501 AND THR-504</scope>
    <scope>IDENTIFICATION BY MASS SPECTROMETRY [LARGE SCALE ANALYSIS]</scope>
    <source>
        <tissue>Cervix carcinoma</tissue>
    </source>
</reference>
<reference key="13">
    <citation type="journal article" date="2011" name="BMC Syst. Biol.">
        <title>Initial characterization of the human central proteome.</title>
        <authorList>
            <person name="Burkard T.R."/>
            <person name="Planyavsky M."/>
            <person name="Kaupe I."/>
            <person name="Breitwieser F.P."/>
            <person name="Buerckstuemmer T."/>
            <person name="Bennett K.L."/>
            <person name="Superti-Furga G."/>
            <person name="Colinge J."/>
        </authorList>
    </citation>
    <scope>IDENTIFICATION BY MASS SPECTROMETRY [LARGE SCALE ANALYSIS]</scope>
</reference>
<reference key="14">
    <citation type="journal article" date="2011" name="Sci. Signal.">
        <title>System-wide temporal characterization of the proteome and phosphoproteome of human embryonic stem cell differentiation.</title>
        <authorList>
            <person name="Rigbolt K.T."/>
            <person name="Prokhorova T.A."/>
            <person name="Akimov V."/>
            <person name="Henningsen J."/>
            <person name="Johansen P.T."/>
            <person name="Kratchmarova I."/>
            <person name="Kassem M."/>
            <person name="Mann M."/>
            <person name="Olsen J.V."/>
            <person name="Blagoev B."/>
        </authorList>
    </citation>
    <scope>PHOSPHORYLATION [LARGE SCALE ANALYSIS] AT SER-157</scope>
    <scope>IDENTIFICATION BY MASS SPECTROMETRY [LARGE SCALE ANALYSIS]</scope>
</reference>
<reference key="15">
    <citation type="journal article" date="2013" name="Dev. Cell">
        <title>CFEOM1-associated kinesin KIF21A is a cortical microtubule growth inhibitor.</title>
        <authorList>
            <person name="van der Vaart B."/>
            <person name="van Riel W.E."/>
            <person name="Doodhi H."/>
            <person name="Kevenaar J.T."/>
            <person name="Katrukha E.A."/>
            <person name="Gumy L."/>
            <person name="Bouchet B.P."/>
            <person name="Grigoriev I."/>
            <person name="Spangler S.A."/>
            <person name="Yu K.L."/>
            <person name="Wulf P.S."/>
            <person name="Wu J."/>
            <person name="Lansbergen G."/>
            <person name="van Battum E.Y."/>
            <person name="Pasterkamp R.J."/>
            <person name="Mimori-Kiyosue Y."/>
            <person name="Demmers J."/>
            <person name="Olieric N."/>
            <person name="Maly I.V."/>
            <person name="Hoogenraad C.C."/>
            <person name="Akhmanova A."/>
        </authorList>
    </citation>
    <scope>SUBUNIT</scope>
    <scope>SUBCELLULAR LOCATION</scope>
</reference>
<reference key="16">
    <citation type="journal article" date="2013" name="J. Cell Sci.">
        <title>Amotl2 interacts with LL5beta, localizes to podosomes and regulates postsynaptic differentiation in muscle.</title>
        <authorList>
            <person name="Proszynski T.J."/>
            <person name="Sanes J.R."/>
        </authorList>
    </citation>
    <scope>INTERACTION WITH AMOTL2</scope>
</reference>
<reference key="17">
    <citation type="journal article" date="2013" name="J. Proteome Res.">
        <title>Toward a comprehensive characterization of a human cancer cell phosphoproteome.</title>
        <authorList>
            <person name="Zhou H."/>
            <person name="Di Palma S."/>
            <person name="Preisinger C."/>
            <person name="Peng M."/>
            <person name="Polat A.N."/>
            <person name="Heck A.J."/>
            <person name="Mohammed S."/>
        </authorList>
    </citation>
    <scope>PHOSPHORYLATION [LARGE SCALE ANALYSIS] AT SER-73; SER-334; SER-415; SER-468 AND THR-898</scope>
    <scope>IDENTIFICATION BY MASS SPECTROMETRY [LARGE SCALE ANALYSIS]</scope>
    <source>
        <tissue>Cervix carcinoma</tissue>
    </source>
</reference>
<reference key="18">
    <citation type="journal article" date="2014" name="J. Proteomics">
        <title>An enzyme assisted RP-RPLC approach for in-depth analysis of human liver phosphoproteome.</title>
        <authorList>
            <person name="Bian Y."/>
            <person name="Song C."/>
            <person name="Cheng K."/>
            <person name="Dong M."/>
            <person name="Wang F."/>
            <person name="Huang J."/>
            <person name="Sun D."/>
            <person name="Wang L."/>
            <person name="Ye M."/>
            <person name="Zou H."/>
        </authorList>
    </citation>
    <scope>PHOSPHORYLATION [LARGE SCALE ANALYSIS] AT SER-212; SER-384; SER-387; SER-420; SER-468 AND THR-550</scope>
    <scope>IDENTIFICATION BY MASS SPECTROMETRY [LARGE SCALE ANALYSIS]</scope>
    <source>
        <tissue>Liver</tissue>
    </source>
</reference>
<reference key="19">
    <citation type="journal article" date="2016" name="Elife">
        <title>Talin-KANK1 interaction controls the recruitment of cortical microtubule stabilizing complexes to focal adhesions.</title>
        <authorList>
            <person name="Bouchet B.P."/>
            <person name="Gough R.E."/>
            <person name="Ammon Y.C."/>
            <person name="van de Willige D."/>
            <person name="Post H."/>
            <person name="Jacquemet G."/>
            <person name="Altelaar A.M."/>
            <person name="Heck A.J."/>
            <person name="Goult B.T."/>
            <person name="Akhmanova A."/>
        </authorList>
    </citation>
    <scope>SUBUNIT</scope>
</reference>
<organism>
    <name type="scientific">Homo sapiens</name>
    <name type="common">Human</name>
    <dbReference type="NCBI Taxonomy" id="9606"/>
    <lineage>
        <taxon>Eukaryota</taxon>
        <taxon>Metazoa</taxon>
        <taxon>Chordata</taxon>
        <taxon>Craniata</taxon>
        <taxon>Vertebrata</taxon>
        <taxon>Euteleostomi</taxon>
        <taxon>Mammalia</taxon>
        <taxon>Eutheria</taxon>
        <taxon>Euarchontoglires</taxon>
        <taxon>Primates</taxon>
        <taxon>Haplorrhini</taxon>
        <taxon>Catarrhini</taxon>
        <taxon>Hominidae</taxon>
        <taxon>Homo</taxon>
    </lineage>
</organism>
<gene>
    <name type="primary">PHLDB2</name>
    <name type="synonym">LL5B</name>
</gene>
<evidence type="ECO:0000250" key="1"/>
<evidence type="ECO:0000250" key="2">
    <source>
        <dbReference type="UniProtKB" id="Q8K1N2"/>
    </source>
</evidence>
<evidence type="ECO:0000255" key="3"/>
<evidence type="ECO:0000255" key="4">
    <source>
        <dbReference type="PROSITE-ProRule" id="PRU00145"/>
    </source>
</evidence>
<evidence type="ECO:0000256" key="5">
    <source>
        <dbReference type="SAM" id="MobiDB-lite"/>
    </source>
</evidence>
<evidence type="ECO:0000269" key="6">
    <source>
    </source>
</evidence>
<evidence type="ECO:0000269" key="7">
    <source>
    </source>
</evidence>
<evidence type="ECO:0000269" key="8">
    <source>
    </source>
</evidence>
<evidence type="ECO:0000269" key="9">
    <source>
    </source>
</evidence>
<evidence type="ECO:0000269" key="10">
    <source>
    </source>
</evidence>
<evidence type="ECO:0000303" key="11">
    <source>
    </source>
</evidence>
<evidence type="ECO:0000303" key="12">
    <source>
    </source>
</evidence>
<evidence type="ECO:0000303" key="13">
    <source>
    </source>
</evidence>
<evidence type="ECO:0000303" key="14">
    <source ref="2"/>
</evidence>
<evidence type="ECO:0000305" key="15"/>
<evidence type="ECO:0007744" key="16">
    <source>
    </source>
</evidence>
<evidence type="ECO:0007744" key="17">
    <source>
    </source>
</evidence>
<evidence type="ECO:0007744" key="18">
    <source>
    </source>
</evidence>
<evidence type="ECO:0007744" key="19">
    <source>
    </source>
</evidence>
<evidence type="ECO:0007744" key="20">
    <source>
    </source>
</evidence>
<evidence type="ECO:0007744" key="21">
    <source>
    </source>
</evidence>
<dbReference type="EMBL" id="AJ496194">
    <property type="protein sequence ID" value="CAD42711.1"/>
    <property type="molecule type" value="mRNA"/>
</dbReference>
<dbReference type="EMBL" id="AF506820">
    <property type="protein sequence ID" value="AAM33634.1"/>
    <property type="molecule type" value="mRNA"/>
</dbReference>
<dbReference type="EMBL" id="AB209903">
    <property type="protein sequence ID" value="BAD93140.1"/>
    <property type="status" value="ALT_INIT"/>
    <property type="molecule type" value="mRNA"/>
</dbReference>
<dbReference type="EMBL" id="CR749654">
    <property type="protein sequence ID" value="CAH18447.1"/>
    <property type="molecule type" value="mRNA"/>
</dbReference>
<dbReference type="EMBL" id="CH471052">
    <property type="protein sequence ID" value="EAW79690.1"/>
    <property type="molecule type" value="Genomic_DNA"/>
</dbReference>
<dbReference type="EMBL" id="BC069194">
    <property type="protein sequence ID" value="AAH69194.1"/>
    <property type="status" value="ALT_SEQ"/>
    <property type="molecule type" value="mRNA"/>
</dbReference>
<dbReference type="EMBL" id="BC142678">
    <property type="protein sequence ID" value="AAI42679.1"/>
    <property type="molecule type" value="mRNA"/>
</dbReference>
<dbReference type="EMBL" id="BC150210">
    <property type="protein sequence ID" value="AAI50211.1"/>
    <property type="molecule type" value="mRNA"/>
</dbReference>
<dbReference type="EMBL" id="AK092996">
    <property type="protein sequence ID" value="BAC04014.1"/>
    <property type="molecule type" value="mRNA"/>
</dbReference>
<dbReference type="EMBL" id="AK096151">
    <property type="protein sequence ID" value="BAC04713.1"/>
    <property type="molecule type" value="mRNA"/>
</dbReference>
<dbReference type="CCDS" id="CCDS2962.1">
    <molecule id="Q86SQ0-2"/>
</dbReference>
<dbReference type="CCDS" id="CCDS46885.1">
    <molecule id="Q86SQ0-3"/>
</dbReference>
<dbReference type="CCDS" id="CCDS46886.1">
    <molecule id="Q86SQ0-1"/>
</dbReference>
<dbReference type="RefSeq" id="NP_001127909.1">
    <molecule id="Q86SQ0-3"/>
    <property type="nucleotide sequence ID" value="NM_001134437.2"/>
</dbReference>
<dbReference type="RefSeq" id="NP_001127910.1">
    <molecule id="Q86SQ0-1"/>
    <property type="nucleotide sequence ID" value="NM_001134438.2"/>
</dbReference>
<dbReference type="RefSeq" id="NP_001127911.1">
    <molecule id="Q86SQ0-1"/>
    <property type="nucleotide sequence ID" value="NM_001134439.2"/>
</dbReference>
<dbReference type="RefSeq" id="NP_665696.1">
    <molecule id="Q86SQ0-2"/>
    <property type="nucleotide sequence ID" value="NM_145753.2"/>
</dbReference>
<dbReference type="PDB" id="8WHJ">
    <property type="method" value="X-ray"/>
    <property type="resolution" value="1.40 A"/>
    <property type="chains" value="A=719-738"/>
</dbReference>
<dbReference type="PDB" id="8WHK">
    <property type="method" value="X-ray"/>
    <property type="resolution" value="2.40 A"/>
    <property type="chains" value="B=720-770"/>
</dbReference>
<dbReference type="PDB" id="8WHM">
    <property type="method" value="X-ray"/>
    <property type="resolution" value="2.30 A"/>
    <property type="chains" value="B=413-490"/>
</dbReference>
<dbReference type="PDBsum" id="8WHJ"/>
<dbReference type="PDBsum" id="8WHK"/>
<dbReference type="PDBsum" id="8WHM"/>
<dbReference type="SMR" id="Q86SQ0"/>
<dbReference type="BioGRID" id="124661">
    <property type="interactions" value="159"/>
</dbReference>
<dbReference type="DIP" id="DIP-42196N"/>
<dbReference type="FunCoup" id="Q86SQ0">
    <property type="interactions" value="1762"/>
</dbReference>
<dbReference type="IntAct" id="Q86SQ0">
    <property type="interactions" value="67"/>
</dbReference>
<dbReference type="MINT" id="Q86SQ0"/>
<dbReference type="STRING" id="9606.ENSP00000405405"/>
<dbReference type="GlyGen" id="Q86SQ0">
    <property type="glycosylation" value="4 sites, 1 O-linked glycan (4 sites)"/>
</dbReference>
<dbReference type="iPTMnet" id="Q86SQ0"/>
<dbReference type="PhosphoSitePlus" id="Q86SQ0"/>
<dbReference type="BioMuta" id="PHLDB2"/>
<dbReference type="DMDM" id="84029396"/>
<dbReference type="jPOST" id="Q86SQ0"/>
<dbReference type="MassIVE" id="Q86SQ0"/>
<dbReference type="PaxDb" id="9606-ENSP00000405405"/>
<dbReference type="PeptideAtlas" id="Q86SQ0"/>
<dbReference type="ProteomicsDB" id="69604">
    <molecule id="Q86SQ0-1"/>
</dbReference>
<dbReference type="ProteomicsDB" id="69605">
    <molecule id="Q86SQ0-2"/>
</dbReference>
<dbReference type="ProteomicsDB" id="69606">
    <molecule id="Q86SQ0-3"/>
</dbReference>
<dbReference type="Pumba" id="Q86SQ0"/>
<dbReference type="Antibodypedia" id="34806">
    <property type="antibodies" value="42 antibodies from 11 providers"/>
</dbReference>
<dbReference type="DNASU" id="90102"/>
<dbReference type="Ensembl" id="ENST00000393923.7">
    <molecule id="Q86SQ0-3"/>
    <property type="protein sequence ID" value="ENSP00000377500.3"/>
    <property type="gene ID" value="ENSG00000144824.21"/>
</dbReference>
<dbReference type="Ensembl" id="ENST00000393925.7">
    <molecule id="Q86SQ0-1"/>
    <property type="protein sequence ID" value="ENSP00000377502.3"/>
    <property type="gene ID" value="ENSG00000144824.21"/>
</dbReference>
<dbReference type="Ensembl" id="ENST00000412622.5">
    <molecule id="Q86SQ0-2"/>
    <property type="protein sequence ID" value="ENSP00000405292.1"/>
    <property type="gene ID" value="ENSG00000144824.21"/>
</dbReference>
<dbReference type="Ensembl" id="ENST00000431670.7">
    <molecule id="Q86SQ0-1"/>
    <property type="protein sequence ID" value="ENSP00000405405.2"/>
    <property type="gene ID" value="ENSG00000144824.21"/>
</dbReference>
<dbReference type="Ensembl" id="ENST00000481953.5">
    <molecule id="Q86SQ0-2"/>
    <property type="protein sequence ID" value="ENSP00000418319.1"/>
    <property type="gene ID" value="ENSG00000144824.21"/>
</dbReference>
<dbReference type="GeneID" id="90102"/>
<dbReference type="KEGG" id="hsa:90102"/>
<dbReference type="MANE-Select" id="ENST00000431670.7">
    <property type="protein sequence ID" value="ENSP00000405405.2"/>
    <property type="RefSeq nucleotide sequence ID" value="NM_001134438.2"/>
    <property type="RefSeq protein sequence ID" value="NP_001127910.1"/>
</dbReference>
<dbReference type="UCSC" id="uc003dyc.4">
    <molecule id="Q86SQ0-1"/>
    <property type="organism name" value="human"/>
</dbReference>
<dbReference type="AGR" id="HGNC:29573"/>
<dbReference type="CTD" id="90102"/>
<dbReference type="DisGeNET" id="90102"/>
<dbReference type="GeneCards" id="PHLDB2"/>
<dbReference type="HGNC" id="HGNC:29573">
    <property type="gene designation" value="PHLDB2"/>
</dbReference>
<dbReference type="HPA" id="ENSG00000144824">
    <property type="expression patterns" value="Low tissue specificity"/>
</dbReference>
<dbReference type="MIM" id="610298">
    <property type="type" value="gene"/>
</dbReference>
<dbReference type="neXtProt" id="NX_Q86SQ0"/>
<dbReference type="OpenTargets" id="ENSG00000144824"/>
<dbReference type="PharmGKB" id="PA134884060"/>
<dbReference type="VEuPathDB" id="HostDB:ENSG00000144824"/>
<dbReference type="eggNOG" id="ENOG502QUWG">
    <property type="taxonomic scope" value="Eukaryota"/>
</dbReference>
<dbReference type="GeneTree" id="ENSGT00940000156371"/>
<dbReference type="HOGENOM" id="CLU_003180_3_0_1"/>
<dbReference type="InParanoid" id="Q86SQ0"/>
<dbReference type="OMA" id="DESSREX"/>
<dbReference type="OrthoDB" id="6020705at2759"/>
<dbReference type="PAN-GO" id="Q86SQ0">
    <property type="GO annotations" value="2 GO annotations based on evolutionary models"/>
</dbReference>
<dbReference type="PhylomeDB" id="Q86SQ0"/>
<dbReference type="TreeFam" id="TF329165"/>
<dbReference type="PathwayCommons" id="Q86SQ0"/>
<dbReference type="SignaLink" id="Q86SQ0"/>
<dbReference type="BioGRID-ORCS" id="90102">
    <property type="hits" value="18 hits in 1152 CRISPR screens"/>
</dbReference>
<dbReference type="CD-CODE" id="DEE660B4">
    <property type="entry name" value="Stress granule"/>
</dbReference>
<dbReference type="CD-CODE" id="F345034F">
    <property type="entry name" value="Signaling cluster"/>
</dbReference>
<dbReference type="ChiTaRS" id="PHLDB2">
    <property type="organism name" value="human"/>
</dbReference>
<dbReference type="GeneWiki" id="PHLDB2"/>
<dbReference type="GenomeRNAi" id="90102"/>
<dbReference type="Pharos" id="Q86SQ0">
    <property type="development level" value="Tbio"/>
</dbReference>
<dbReference type="PRO" id="PR:Q86SQ0"/>
<dbReference type="Proteomes" id="UP000005640">
    <property type="component" value="Chromosome 3"/>
</dbReference>
<dbReference type="RNAct" id="Q86SQ0">
    <property type="molecule type" value="protein"/>
</dbReference>
<dbReference type="Bgee" id="ENSG00000144824">
    <property type="expression patterns" value="Expressed in left ventricle myocardium and 180 other cell types or tissues"/>
</dbReference>
<dbReference type="ExpressionAtlas" id="Q86SQ0">
    <property type="expression patterns" value="baseline and differential"/>
</dbReference>
<dbReference type="GO" id="GO:0070161">
    <property type="term" value="C:anchoring junction"/>
    <property type="evidence" value="ECO:0007669"/>
    <property type="project" value="UniProtKB-KW"/>
</dbReference>
<dbReference type="GO" id="GO:0045180">
    <property type="term" value="C:basal cortex"/>
    <property type="evidence" value="ECO:0000314"/>
    <property type="project" value="UniProtKB"/>
</dbReference>
<dbReference type="GO" id="GO:0005938">
    <property type="term" value="C:cell cortex"/>
    <property type="evidence" value="ECO:0000314"/>
    <property type="project" value="UniProtKB"/>
</dbReference>
<dbReference type="GO" id="GO:0031252">
    <property type="term" value="C:cell leading edge"/>
    <property type="evidence" value="ECO:0000314"/>
    <property type="project" value="UniProtKB"/>
</dbReference>
<dbReference type="GO" id="GO:0042995">
    <property type="term" value="C:cell projection"/>
    <property type="evidence" value="ECO:0007669"/>
    <property type="project" value="UniProtKB-KW"/>
</dbReference>
<dbReference type="GO" id="GO:0005829">
    <property type="term" value="C:cytosol"/>
    <property type="evidence" value="ECO:0000314"/>
    <property type="project" value="HPA"/>
</dbReference>
<dbReference type="GO" id="GO:0045111">
    <property type="term" value="C:intermediate filament cytoskeleton"/>
    <property type="evidence" value="ECO:0000314"/>
    <property type="project" value="HPA"/>
</dbReference>
<dbReference type="GO" id="GO:0005886">
    <property type="term" value="C:plasma membrane"/>
    <property type="evidence" value="ECO:0000314"/>
    <property type="project" value="HPA"/>
</dbReference>
<dbReference type="GO" id="GO:0002102">
    <property type="term" value="C:podosome"/>
    <property type="evidence" value="ECO:0000314"/>
    <property type="project" value="UniProtKB"/>
</dbReference>
<dbReference type="GO" id="GO:0045296">
    <property type="term" value="F:cadherin binding"/>
    <property type="evidence" value="ECO:0007005"/>
    <property type="project" value="BHF-UCL"/>
</dbReference>
<dbReference type="GO" id="GO:0071711">
    <property type="term" value="P:basement membrane organization"/>
    <property type="evidence" value="ECO:0000315"/>
    <property type="project" value="UniProtKB"/>
</dbReference>
<dbReference type="GO" id="GO:0016477">
    <property type="term" value="P:cell migration"/>
    <property type="evidence" value="ECO:0007669"/>
    <property type="project" value="Ensembl"/>
</dbReference>
<dbReference type="GO" id="GO:0030010">
    <property type="term" value="P:establishment of cell polarity"/>
    <property type="evidence" value="ECO:0007669"/>
    <property type="project" value="Ensembl"/>
</dbReference>
<dbReference type="GO" id="GO:0045184">
    <property type="term" value="P:establishment of protein localization"/>
    <property type="evidence" value="ECO:0000315"/>
    <property type="project" value="UniProtKB"/>
</dbReference>
<dbReference type="GO" id="GO:0000226">
    <property type="term" value="P:microtubule cytoskeleton organization"/>
    <property type="evidence" value="ECO:0000315"/>
    <property type="project" value="UniProtKB"/>
</dbReference>
<dbReference type="GO" id="GO:0051895">
    <property type="term" value="P:negative regulation of focal adhesion assembly"/>
    <property type="evidence" value="ECO:0000315"/>
    <property type="project" value="UniProtKB"/>
</dbReference>
<dbReference type="GO" id="GO:0051497">
    <property type="term" value="P:negative regulation of stress fiber assembly"/>
    <property type="evidence" value="ECO:0000315"/>
    <property type="project" value="UniProtKB"/>
</dbReference>
<dbReference type="GO" id="GO:1903690">
    <property type="term" value="P:negative regulation of wound healing, spreading of epidermal cells"/>
    <property type="evidence" value="ECO:0000315"/>
    <property type="project" value="UniProtKB"/>
</dbReference>
<dbReference type="GO" id="GO:0070507">
    <property type="term" value="P:regulation of microtubule cytoskeleton organization"/>
    <property type="evidence" value="ECO:0000318"/>
    <property type="project" value="GO_Central"/>
</dbReference>
<dbReference type="CDD" id="cd14673">
    <property type="entry name" value="PH_PHLDB1_2"/>
    <property type="match status" value="1"/>
</dbReference>
<dbReference type="FunFam" id="2.30.29.30:FF:000006">
    <property type="entry name" value="Pleckstrin homology like domain family B member 1"/>
    <property type="match status" value="1"/>
</dbReference>
<dbReference type="Gene3D" id="2.30.29.30">
    <property type="entry name" value="Pleckstrin-homology domain (PH domain)/Phosphotyrosine-binding domain (PTB)"/>
    <property type="match status" value="1"/>
</dbReference>
<dbReference type="InterPro" id="IPR011993">
    <property type="entry name" value="PH-like_dom_sf"/>
</dbReference>
<dbReference type="InterPro" id="IPR052212">
    <property type="entry name" value="PH-like_domain"/>
</dbReference>
<dbReference type="InterPro" id="IPR001849">
    <property type="entry name" value="PH_domain"/>
</dbReference>
<dbReference type="InterPro" id="IPR037810">
    <property type="entry name" value="PHLDB1/2/3_PH"/>
</dbReference>
<dbReference type="PANTHER" id="PTHR12156:SF21">
    <property type="entry name" value="PLECKSTRIN HOMOLOGY-LIKE DOMAIN FAMILY B MEMBER 2"/>
    <property type="match status" value="1"/>
</dbReference>
<dbReference type="PANTHER" id="PTHR12156">
    <property type="entry name" value="PLECKSTRIN HOMOLOGY-LIKE DOMAIN, FAMILY B, MEMBER 3"/>
    <property type="match status" value="1"/>
</dbReference>
<dbReference type="Pfam" id="PF00169">
    <property type="entry name" value="PH"/>
    <property type="match status" value="1"/>
</dbReference>
<dbReference type="SMART" id="SM00233">
    <property type="entry name" value="PH"/>
    <property type="match status" value="1"/>
</dbReference>
<dbReference type="SUPFAM" id="SSF50729">
    <property type="entry name" value="PH domain-like"/>
    <property type="match status" value="1"/>
</dbReference>
<dbReference type="PROSITE" id="PS50003">
    <property type="entry name" value="PH_DOMAIN"/>
    <property type="match status" value="1"/>
</dbReference>
<keyword id="KW-0002">3D-structure</keyword>
<keyword id="KW-0025">Alternative splicing</keyword>
<keyword id="KW-0965">Cell junction</keyword>
<keyword id="KW-0966">Cell projection</keyword>
<keyword id="KW-0175">Coiled coil</keyword>
<keyword id="KW-0963">Cytoplasm</keyword>
<keyword id="KW-0472">Membrane</keyword>
<keyword id="KW-0597">Phosphoprotein</keyword>
<keyword id="KW-1267">Proteomics identification</keyword>
<keyword id="KW-1185">Reference proteome</keyword>
<feature type="chain" id="PRO_0000053894" description="Pleckstrin homology-like domain family B member 2">
    <location>
        <begin position="1"/>
        <end position="1253"/>
    </location>
</feature>
<feature type="domain" description="PH" evidence="4">
    <location>
        <begin position="1143"/>
        <end position="1246"/>
    </location>
</feature>
<feature type="region of interest" description="Disordered" evidence="5">
    <location>
        <begin position="1"/>
        <end position="43"/>
    </location>
</feature>
<feature type="region of interest" description="Disordered" evidence="5">
    <location>
        <begin position="60"/>
        <end position="159"/>
    </location>
</feature>
<feature type="region of interest" description="Disordered" evidence="5">
    <location>
        <begin position="187"/>
        <end position="212"/>
    </location>
</feature>
<feature type="region of interest" description="Disordered" evidence="5">
    <location>
        <begin position="265"/>
        <end position="286"/>
    </location>
</feature>
<feature type="region of interest" description="Disordered" evidence="5">
    <location>
        <begin position="525"/>
        <end position="567"/>
    </location>
</feature>
<feature type="coiled-coil region" evidence="3">
    <location>
        <begin position="584"/>
        <end position="696"/>
    </location>
</feature>
<feature type="coiled-coil region" evidence="3">
    <location>
        <begin position="722"/>
        <end position="807"/>
    </location>
</feature>
<feature type="coiled-coil region" evidence="3">
    <location>
        <begin position="1032"/>
        <end position="1098"/>
    </location>
</feature>
<feature type="compositionally biased region" description="Basic and acidic residues" evidence="5">
    <location>
        <begin position="1"/>
        <end position="12"/>
    </location>
</feature>
<feature type="compositionally biased region" description="Polar residues" evidence="5">
    <location>
        <begin position="29"/>
        <end position="43"/>
    </location>
</feature>
<feature type="compositionally biased region" description="Polar residues" evidence="5">
    <location>
        <begin position="74"/>
        <end position="96"/>
    </location>
</feature>
<feature type="compositionally biased region" description="Basic and acidic residues" evidence="5">
    <location>
        <begin position="126"/>
        <end position="144"/>
    </location>
</feature>
<feature type="modified residue" description="Phosphoserine" evidence="16">
    <location>
        <position position="71"/>
    </location>
</feature>
<feature type="modified residue" description="Phosphoserine" evidence="16 20">
    <location>
        <position position="73"/>
    </location>
</feature>
<feature type="modified residue" description="Phosphoserine" evidence="16 17 19">
    <location>
        <position position="157"/>
    </location>
</feature>
<feature type="modified residue" description="Phosphoserine" evidence="2">
    <location>
        <position position="204"/>
    </location>
</feature>
<feature type="modified residue" description="Phosphoserine" evidence="16 21">
    <location>
        <position position="212"/>
    </location>
</feature>
<feature type="modified residue" description="Phosphoserine" evidence="2">
    <location>
        <position position="242"/>
    </location>
</feature>
<feature type="modified residue" description="Phosphoserine" evidence="2">
    <location>
        <position position="245"/>
    </location>
</feature>
<feature type="modified residue" description="Phosphoserine" evidence="2">
    <location>
        <position position="330"/>
    </location>
</feature>
<feature type="modified residue" description="Phosphoserine" evidence="16 20">
    <location>
        <position position="334"/>
    </location>
</feature>
<feature type="modified residue" description="Phosphoserine" evidence="2">
    <location>
        <position position="348"/>
    </location>
</feature>
<feature type="modified residue" description="Phosphoserine" evidence="16">
    <location>
        <position position="351"/>
    </location>
</feature>
<feature type="modified residue" description="Phosphoserine" evidence="16 21">
    <location>
        <position position="384"/>
    </location>
</feature>
<feature type="modified residue" description="Phosphoserine" evidence="16 21">
    <location>
        <position position="387"/>
    </location>
</feature>
<feature type="modified residue" description="Phosphoserine" evidence="16 20">
    <location>
        <position position="415"/>
    </location>
</feature>
<feature type="modified residue" description="Phosphoserine" evidence="21">
    <location>
        <position position="420"/>
    </location>
</feature>
<feature type="modified residue" description="Phosphoserine" evidence="16 20 21">
    <location>
        <position position="468"/>
    </location>
</feature>
<feature type="modified residue" description="Phosphoserine" evidence="16 18">
    <location>
        <position position="489"/>
    </location>
</feature>
<feature type="modified residue" description="Phosphoserine" evidence="16 18">
    <location>
        <position position="501"/>
    </location>
</feature>
<feature type="modified residue" description="Phosphothreonine" evidence="18">
    <location>
        <position position="504"/>
    </location>
</feature>
<feature type="modified residue" description="Phosphoserine" evidence="16">
    <location>
        <position position="513"/>
    </location>
</feature>
<feature type="modified residue" description="Phosphothreonine" evidence="16 21">
    <location>
        <position position="550"/>
    </location>
</feature>
<feature type="modified residue" description="Phosphothreonine" evidence="16">
    <location>
        <position position="574"/>
    </location>
</feature>
<feature type="modified residue" description="Phosphothreonine" evidence="16 20">
    <location>
        <position position="898"/>
    </location>
</feature>
<feature type="splice variant" id="VSP_016744" description="In isoform 3." evidence="13">
    <original>M</original>
    <variation>MEEEDTKREVPKEDGVGDVQHFDSSKIM</variation>
    <location>
        <position position="1"/>
    </location>
</feature>
<feature type="splice variant" id="VSP_016745" description="In isoform 2 and isoform 3." evidence="11 12 13 14">
    <location>
        <begin position="668"/>
        <end position="710"/>
    </location>
</feature>
<feature type="sequence variant" id="VAR_024760" description="In dbSNP:rs3749298." evidence="7">
    <original>P</original>
    <variation>S</variation>
    <location>
        <position position="941"/>
    </location>
</feature>
<feature type="mutagenesis site" description="Loss of binding to PtdIns(3,4,5)P3." evidence="6">
    <original>KR</original>
    <variation>AA</variation>
    <location>
        <begin position="1162"/>
        <end position="1163"/>
    </location>
</feature>
<feature type="sequence conflict" description="In Ref. 7; BAC04014." evidence="15" ref="7">
    <original>Y</original>
    <variation>H</variation>
    <location>
        <position position="96"/>
    </location>
</feature>
<feature type="sequence conflict" description="In Ref. 4; CAH18447." evidence="15" ref="4">
    <original>T</original>
    <variation>A</variation>
    <location>
        <position position="346"/>
    </location>
</feature>
<feature type="sequence conflict" description="In Ref. 1; CAD42711." evidence="15" ref="1">
    <original>Q</original>
    <variation>E</variation>
    <location>
        <position position="585"/>
    </location>
</feature>